<keyword id="KW-0032">Aminotransferase</keyword>
<keyword id="KW-0663">Pyridoxal phosphate</keyword>
<keyword id="KW-1185">Reference proteome</keyword>
<keyword id="KW-0808">Transferase</keyword>
<protein>
    <recommendedName>
        <fullName evidence="1">Aromatic amino acid aminotransferase</fullName>
        <shortName evidence="1">ArAT</shortName>
        <ecNumber evidence="1">2.6.1.57</ecNumber>
    </recommendedName>
</protein>
<organism>
    <name type="scientific">Mycobacterium bovis (strain ATCC BAA-935 / AF2122/97)</name>
    <dbReference type="NCBI Taxonomy" id="233413"/>
    <lineage>
        <taxon>Bacteria</taxon>
        <taxon>Bacillati</taxon>
        <taxon>Actinomycetota</taxon>
        <taxon>Actinomycetes</taxon>
        <taxon>Mycobacteriales</taxon>
        <taxon>Mycobacteriaceae</taxon>
        <taxon>Mycobacterium</taxon>
        <taxon>Mycobacterium tuberculosis complex</taxon>
    </lineage>
</organism>
<evidence type="ECO:0000255" key="1">
    <source>
        <dbReference type="HAMAP-Rule" id="MF_01513"/>
    </source>
</evidence>
<accession>Q7TVQ0</accession>
<accession>A0A1R3Y580</accession>
<accession>X2BP56</accession>
<feature type="chain" id="PRO_0000153515" description="Aromatic amino acid aminotransferase">
    <location>
        <begin position="1"/>
        <end position="353"/>
    </location>
</feature>
<feature type="modified residue" description="N6-(pyridoxal phosphate)lysine" evidence="1">
    <location>
        <position position="217"/>
    </location>
</feature>
<gene>
    <name evidence="1" type="primary">pat</name>
    <name type="synonym">hisC2</name>
    <name type="ordered locus">BQ2027_MB3800</name>
</gene>
<proteinExistence type="inferred from homology"/>
<name>PATR_MYCBO</name>
<dbReference type="EC" id="2.6.1.57" evidence="1"/>
<dbReference type="EMBL" id="LT708304">
    <property type="protein sequence ID" value="SIU02429.1"/>
    <property type="molecule type" value="Genomic_DNA"/>
</dbReference>
<dbReference type="RefSeq" id="NP_857437.1">
    <property type="nucleotide sequence ID" value="NC_002945.3"/>
</dbReference>
<dbReference type="SMR" id="Q7TVQ0"/>
<dbReference type="KEGG" id="mbo:BQ2027_MB3800"/>
<dbReference type="PATRIC" id="fig|233413.5.peg.4156"/>
<dbReference type="Proteomes" id="UP000001419">
    <property type="component" value="Chromosome"/>
</dbReference>
<dbReference type="GO" id="GO:0008793">
    <property type="term" value="F:aromatic-amino-acid transaminase activity"/>
    <property type="evidence" value="ECO:0007669"/>
    <property type="project" value="UniProtKB-UniRule"/>
</dbReference>
<dbReference type="GO" id="GO:0004400">
    <property type="term" value="F:histidinol-phosphate transaminase activity"/>
    <property type="evidence" value="ECO:0007669"/>
    <property type="project" value="InterPro"/>
</dbReference>
<dbReference type="GO" id="GO:0030170">
    <property type="term" value="F:pyridoxal phosphate binding"/>
    <property type="evidence" value="ECO:0007669"/>
    <property type="project" value="UniProtKB-UniRule"/>
</dbReference>
<dbReference type="GO" id="GO:0000105">
    <property type="term" value="P:L-histidine biosynthetic process"/>
    <property type="evidence" value="ECO:0007669"/>
    <property type="project" value="InterPro"/>
</dbReference>
<dbReference type="CDD" id="cd00609">
    <property type="entry name" value="AAT_like"/>
    <property type="match status" value="1"/>
</dbReference>
<dbReference type="Gene3D" id="3.90.1150.10">
    <property type="entry name" value="Aspartate Aminotransferase, domain 1"/>
    <property type="match status" value="1"/>
</dbReference>
<dbReference type="Gene3D" id="3.40.640.10">
    <property type="entry name" value="Type I PLP-dependent aspartate aminotransferase-like (Major domain)"/>
    <property type="match status" value="1"/>
</dbReference>
<dbReference type="HAMAP" id="MF_01023">
    <property type="entry name" value="HisC_aminotrans_2"/>
    <property type="match status" value="1"/>
</dbReference>
<dbReference type="HAMAP" id="MF_01513">
    <property type="entry name" value="Phe_aminotrans_2"/>
    <property type="match status" value="1"/>
</dbReference>
<dbReference type="InterPro" id="IPR001917">
    <property type="entry name" value="Aminotrans_II_pyridoxalP_BS"/>
</dbReference>
<dbReference type="InterPro" id="IPR004839">
    <property type="entry name" value="Aminotransferase_I/II_large"/>
</dbReference>
<dbReference type="InterPro" id="IPR024892">
    <property type="entry name" value="ArAT"/>
</dbReference>
<dbReference type="InterPro" id="IPR005861">
    <property type="entry name" value="HisP_aminotrans"/>
</dbReference>
<dbReference type="InterPro" id="IPR050106">
    <property type="entry name" value="HistidinolP_aminotransfase"/>
</dbReference>
<dbReference type="InterPro" id="IPR015424">
    <property type="entry name" value="PyrdxlP-dep_Trfase"/>
</dbReference>
<dbReference type="InterPro" id="IPR015421">
    <property type="entry name" value="PyrdxlP-dep_Trfase_major"/>
</dbReference>
<dbReference type="InterPro" id="IPR015422">
    <property type="entry name" value="PyrdxlP-dep_Trfase_small"/>
</dbReference>
<dbReference type="NCBIfam" id="NF002878">
    <property type="entry name" value="PRK03321.1"/>
    <property type="match status" value="1"/>
</dbReference>
<dbReference type="PANTHER" id="PTHR43643:SF3">
    <property type="entry name" value="HISTIDINOL-PHOSPHATE AMINOTRANSFERASE"/>
    <property type="match status" value="1"/>
</dbReference>
<dbReference type="PANTHER" id="PTHR43643">
    <property type="entry name" value="HISTIDINOL-PHOSPHATE AMINOTRANSFERASE 2"/>
    <property type="match status" value="1"/>
</dbReference>
<dbReference type="Pfam" id="PF00155">
    <property type="entry name" value="Aminotran_1_2"/>
    <property type="match status" value="1"/>
</dbReference>
<dbReference type="SUPFAM" id="SSF53383">
    <property type="entry name" value="PLP-dependent transferases"/>
    <property type="match status" value="1"/>
</dbReference>
<dbReference type="PROSITE" id="PS00599">
    <property type="entry name" value="AA_TRANSFER_CLASS_2"/>
    <property type="match status" value="1"/>
</dbReference>
<sequence>MTARLRPELAGLPVYVPGKTVPGAIKLASNETVFGPLPSVRAAIDRATDTVNRYPDNGCVQLKAALARHLGPDFAPEHVAVGCGSVSLCQQLVQVTASVGDEVVFGWRSFELYPPQVRVAGAIPIQVPLTDHTFDLYAMLAAVTDRTRLIFVCNPNNPTSTVVGPDALARFVEAVPAHILIAIDEAYVEYIRDGMRPDSLGLVRAHNNVVVLRTFSKAYGLAGLRIGYAIGHPDVITALDKVYVPFTVSSIGQAAAIASLDAADELLARTDTVVAERARVSAELRAAGFTLPPSQANFVWLPLGSRTQDFVEQAADARIVVRPYGTDGVRVTVAAPEENDAFLRFARRWRSDQ</sequence>
<reference key="1">
    <citation type="journal article" date="2003" name="Proc. Natl. Acad. Sci. U.S.A.">
        <title>The complete genome sequence of Mycobacterium bovis.</title>
        <authorList>
            <person name="Garnier T."/>
            <person name="Eiglmeier K."/>
            <person name="Camus J.-C."/>
            <person name="Medina N."/>
            <person name="Mansoor H."/>
            <person name="Pryor M."/>
            <person name="Duthoy S."/>
            <person name="Grondin S."/>
            <person name="Lacroix C."/>
            <person name="Monsempe C."/>
            <person name="Simon S."/>
            <person name="Harris B."/>
            <person name="Atkin R."/>
            <person name="Doggett J."/>
            <person name="Mayes R."/>
            <person name="Keating L."/>
            <person name="Wheeler P.R."/>
            <person name="Parkhill J."/>
            <person name="Barrell B.G."/>
            <person name="Cole S.T."/>
            <person name="Gordon S.V."/>
            <person name="Hewinson R.G."/>
        </authorList>
    </citation>
    <scope>NUCLEOTIDE SEQUENCE [LARGE SCALE GENOMIC DNA]</scope>
    <source>
        <strain>ATCC BAA-935 / AF2122/97</strain>
    </source>
</reference>
<reference key="2">
    <citation type="journal article" date="2017" name="Genome Announc.">
        <title>Updated reference genome sequence and annotation of Mycobacterium bovis AF2122/97.</title>
        <authorList>
            <person name="Malone K.M."/>
            <person name="Farrell D."/>
            <person name="Stuber T.P."/>
            <person name="Schubert O.T."/>
            <person name="Aebersold R."/>
            <person name="Robbe-Austerman S."/>
            <person name="Gordon S.V."/>
        </authorList>
    </citation>
    <scope>NUCLEOTIDE SEQUENCE [LARGE SCALE GENOMIC DNA]</scope>
    <scope>GENOME REANNOTATION</scope>
    <source>
        <strain>ATCC BAA-935 / AF2122/97</strain>
    </source>
</reference>
<comment type="function">
    <text evidence="1">Aminotransferase that catalyzes the conversion of aromatic amino acids and 2-oxoglutarate into corresponding aromatic oxo acids and L-glutamate.</text>
</comment>
<comment type="catalytic activity">
    <reaction evidence="1">
        <text>an aromatic L-alpha-amino acid + 2-oxoglutarate = an aromatic oxo-acid + L-glutamate</text>
        <dbReference type="Rhea" id="RHEA:17533"/>
        <dbReference type="ChEBI" id="CHEBI:16810"/>
        <dbReference type="ChEBI" id="CHEBI:29985"/>
        <dbReference type="ChEBI" id="CHEBI:73309"/>
        <dbReference type="ChEBI" id="CHEBI:84824"/>
        <dbReference type="EC" id="2.6.1.57"/>
    </reaction>
</comment>
<comment type="cofactor">
    <cofactor evidence="1">
        <name>pyridoxal 5'-phosphate</name>
        <dbReference type="ChEBI" id="CHEBI:597326"/>
    </cofactor>
</comment>
<comment type="subunit">
    <text evidence="1">Homodimer.</text>
</comment>
<comment type="similarity">
    <text evidence="1">Belongs to the class-II pyridoxal-phosphate-dependent aminotransferase family.</text>
</comment>